<dbReference type="EC" id="2.4.2.-" evidence="1"/>
<dbReference type="EC" id="2.4.2.22" evidence="1"/>
<dbReference type="EMBL" id="CP001048">
    <property type="protein sequence ID" value="ACC87924.1"/>
    <property type="molecule type" value="Genomic_DNA"/>
</dbReference>
<dbReference type="RefSeq" id="WP_002208704.1">
    <property type="nucleotide sequence ID" value="NZ_CP009780.1"/>
</dbReference>
<dbReference type="SMR" id="B2K658"/>
<dbReference type="GeneID" id="57975493"/>
<dbReference type="KEGG" id="ypb:YPTS_0943"/>
<dbReference type="PATRIC" id="fig|502801.10.peg.280"/>
<dbReference type="UniPathway" id="UPA00602">
    <property type="reaction ID" value="UER00658"/>
</dbReference>
<dbReference type="UniPathway" id="UPA00909">
    <property type="reaction ID" value="UER00887"/>
</dbReference>
<dbReference type="GO" id="GO:0005829">
    <property type="term" value="C:cytosol"/>
    <property type="evidence" value="ECO:0007669"/>
    <property type="project" value="TreeGrafter"/>
</dbReference>
<dbReference type="GO" id="GO:0005886">
    <property type="term" value="C:plasma membrane"/>
    <property type="evidence" value="ECO:0007669"/>
    <property type="project" value="UniProtKB-SubCell"/>
</dbReference>
<dbReference type="GO" id="GO:0052657">
    <property type="term" value="F:guanine phosphoribosyltransferase activity"/>
    <property type="evidence" value="ECO:0007669"/>
    <property type="project" value="RHEA"/>
</dbReference>
<dbReference type="GO" id="GO:0004422">
    <property type="term" value="F:hypoxanthine phosphoribosyltransferase activity"/>
    <property type="evidence" value="ECO:0007669"/>
    <property type="project" value="RHEA"/>
</dbReference>
<dbReference type="GO" id="GO:0000287">
    <property type="term" value="F:magnesium ion binding"/>
    <property type="evidence" value="ECO:0007669"/>
    <property type="project" value="UniProtKB-UniRule"/>
</dbReference>
<dbReference type="GO" id="GO:0000310">
    <property type="term" value="F:xanthine phosphoribosyltransferase activity"/>
    <property type="evidence" value="ECO:0007669"/>
    <property type="project" value="UniProtKB-UniRule"/>
</dbReference>
<dbReference type="GO" id="GO:0032263">
    <property type="term" value="P:GMP salvage"/>
    <property type="evidence" value="ECO:0007669"/>
    <property type="project" value="UniProtKB-UniRule"/>
</dbReference>
<dbReference type="GO" id="GO:0032264">
    <property type="term" value="P:IMP salvage"/>
    <property type="evidence" value="ECO:0007669"/>
    <property type="project" value="TreeGrafter"/>
</dbReference>
<dbReference type="GO" id="GO:0006166">
    <property type="term" value="P:purine ribonucleoside salvage"/>
    <property type="evidence" value="ECO:0007669"/>
    <property type="project" value="UniProtKB-KW"/>
</dbReference>
<dbReference type="GO" id="GO:0032265">
    <property type="term" value="P:XMP salvage"/>
    <property type="evidence" value="ECO:0007669"/>
    <property type="project" value="UniProtKB-UniRule"/>
</dbReference>
<dbReference type="CDD" id="cd06223">
    <property type="entry name" value="PRTases_typeI"/>
    <property type="match status" value="1"/>
</dbReference>
<dbReference type="FunFam" id="3.40.50.2020:FF:000009">
    <property type="entry name" value="Xanthine phosphoribosyltransferase"/>
    <property type="match status" value="1"/>
</dbReference>
<dbReference type="Gene3D" id="3.40.50.2020">
    <property type="match status" value="1"/>
</dbReference>
<dbReference type="HAMAP" id="MF_01903">
    <property type="entry name" value="XGPRT"/>
    <property type="match status" value="1"/>
</dbReference>
<dbReference type="InterPro" id="IPR000836">
    <property type="entry name" value="PRibTrfase_dom"/>
</dbReference>
<dbReference type="InterPro" id="IPR029057">
    <property type="entry name" value="PRTase-like"/>
</dbReference>
<dbReference type="InterPro" id="IPR023747">
    <property type="entry name" value="Xanthine_Guanine_PRibTrfase"/>
</dbReference>
<dbReference type="NCBIfam" id="NF006613">
    <property type="entry name" value="PRK09177.1"/>
    <property type="match status" value="1"/>
</dbReference>
<dbReference type="PANTHER" id="PTHR39563">
    <property type="entry name" value="XANTHINE PHOSPHORIBOSYLTRANSFERASE"/>
    <property type="match status" value="1"/>
</dbReference>
<dbReference type="PANTHER" id="PTHR39563:SF1">
    <property type="entry name" value="XANTHINE-GUANINE PHOSPHORIBOSYLTRANSFERASE"/>
    <property type="match status" value="1"/>
</dbReference>
<dbReference type="Pfam" id="PF00156">
    <property type="entry name" value="Pribosyltran"/>
    <property type="match status" value="1"/>
</dbReference>
<dbReference type="SUPFAM" id="SSF53271">
    <property type="entry name" value="PRTase-like"/>
    <property type="match status" value="1"/>
</dbReference>
<dbReference type="PROSITE" id="PS00103">
    <property type="entry name" value="PUR_PYR_PR_TRANSFER"/>
    <property type="match status" value="1"/>
</dbReference>
<evidence type="ECO:0000255" key="1">
    <source>
        <dbReference type="HAMAP-Rule" id="MF_01903"/>
    </source>
</evidence>
<comment type="function">
    <text evidence="1">Purine salvage pathway enzyme that catalyzes the transfer of the ribosyl-5-phosphate group from 5-phospho-alpha-D-ribose 1-diphosphate (PRPP) to the N9 position of the 6-oxopurines guanine and xanthine to form the corresponding ribonucleotides GMP (guanosine 5'-monophosphate) and XMP (xanthosine 5'-monophosphate), with the release of PPi. To a lesser extent, also acts on hypoxanthine.</text>
</comment>
<comment type="catalytic activity">
    <reaction evidence="1">
        <text>GMP + diphosphate = guanine + 5-phospho-alpha-D-ribose 1-diphosphate</text>
        <dbReference type="Rhea" id="RHEA:25424"/>
        <dbReference type="ChEBI" id="CHEBI:16235"/>
        <dbReference type="ChEBI" id="CHEBI:33019"/>
        <dbReference type="ChEBI" id="CHEBI:58017"/>
        <dbReference type="ChEBI" id="CHEBI:58115"/>
    </reaction>
    <physiologicalReaction direction="right-to-left" evidence="1">
        <dbReference type="Rhea" id="RHEA:25426"/>
    </physiologicalReaction>
</comment>
<comment type="catalytic activity">
    <reaction evidence="1">
        <text>XMP + diphosphate = xanthine + 5-phospho-alpha-D-ribose 1-diphosphate</text>
        <dbReference type="Rhea" id="RHEA:10800"/>
        <dbReference type="ChEBI" id="CHEBI:17712"/>
        <dbReference type="ChEBI" id="CHEBI:33019"/>
        <dbReference type="ChEBI" id="CHEBI:57464"/>
        <dbReference type="ChEBI" id="CHEBI:58017"/>
        <dbReference type="EC" id="2.4.2.22"/>
    </reaction>
    <physiologicalReaction direction="right-to-left" evidence="1">
        <dbReference type="Rhea" id="RHEA:10802"/>
    </physiologicalReaction>
</comment>
<comment type="catalytic activity">
    <reaction evidence="1">
        <text>IMP + diphosphate = hypoxanthine + 5-phospho-alpha-D-ribose 1-diphosphate</text>
        <dbReference type="Rhea" id="RHEA:17973"/>
        <dbReference type="ChEBI" id="CHEBI:17368"/>
        <dbReference type="ChEBI" id="CHEBI:33019"/>
        <dbReference type="ChEBI" id="CHEBI:58017"/>
        <dbReference type="ChEBI" id="CHEBI:58053"/>
    </reaction>
    <physiologicalReaction direction="right-to-left" evidence="1">
        <dbReference type="Rhea" id="RHEA:17975"/>
    </physiologicalReaction>
</comment>
<comment type="cofactor">
    <cofactor evidence="1">
        <name>Mg(2+)</name>
        <dbReference type="ChEBI" id="CHEBI:18420"/>
    </cofactor>
</comment>
<comment type="pathway">
    <text evidence="1">Purine metabolism; GMP biosynthesis via salvage pathway; GMP from guanine: step 1/1.</text>
</comment>
<comment type="pathway">
    <text evidence="1">Purine metabolism; XMP biosynthesis via salvage pathway; XMP from xanthine: step 1/1.</text>
</comment>
<comment type="subunit">
    <text evidence="1">Homotetramer.</text>
</comment>
<comment type="subcellular location">
    <subcellularLocation>
        <location evidence="1">Cell inner membrane</location>
        <topology evidence="1">Peripheral membrane protein</topology>
    </subcellularLocation>
</comment>
<comment type="similarity">
    <text evidence="1">Belongs to the purine/pyrimidine phosphoribosyltransferase family. XGPT subfamily.</text>
</comment>
<accession>B2K658</accession>
<name>XGPT_YERPB</name>
<protein>
    <recommendedName>
        <fullName evidence="1">Xanthine-guanine phosphoribosyltransferase</fullName>
        <shortName evidence="1">XGPRT</shortName>
        <ecNumber evidence="1">2.4.2.-</ecNumber>
        <ecNumber evidence="1">2.4.2.22</ecNumber>
    </recommendedName>
    <alternativeName>
        <fullName evidence="1">Xanthine phosphoribosyltransferase</fullName>
    </alternativeName>
</protein>
<keyword id="KW-0997">Cell inner membrane</keyword>
<keyword id="KW-1003">Cell membrane</keyword>
<keyword id="KW-0328">Glycosyltransferase</keyword>
<keyword id="KW-0460">Magnesium</keyword>
<keyword id="KW-0472">Membrane</keyword>
<keyword id="KW-0479">Metal-binding</keyword>
<keyword id="KW-0660">Purine salvage</keyword>
<keyword id="KW-0808">Transferase</keyword>
<feature type="chain" id="PRO_1000188764" description="Xanthine-guanine phosphoribosyltransferase">
    <location>
        <begin position="1"/>
        <end position="152"/>
    </location>
</feature>
<feature type="binding site" evidence="1">
    <location>
        <begin position="37"/>
        <end position="38"/>
    </location>
    <ligand>
        <name>5-phospho-alpha-D-ribose 1-diphosphate</name>
        <dbReference type="ChEBI" id="CHEBI:58017"/>
    </ligand>
</feature>
<feature type="binding site" evidence="1">
    <location>
        <position position="69"/>
    </location>
    <ligand>
        <name>5-phospho-alpha-D-ribose 1-diphosphate</name>
        <dbReference type="ChEBI" id="CHEBI:58017"/>
    </ligand>
</feature>
<feature type="binding site" evidence="1">
    <location>
        <position position="69"/>
    </location>
    <ligand>
        <name>GMP</name>
        <dbReference type="ChEBI" id="CHEBI:58115"/>
    </ligand>
</feature>
<feature type="binding site" evidence="1">
    <location>
        <begin position="88"/>
        <end position="96"/>
    </location>
    <ligand>
        <name>5-phospho-alpha-D-ribose 1-diphosphate</name>
        <dbReference type="ChEBI" id="CHEBI:58017"/>
    </ligand>
</feature>
<feature type="binding site" evidence="1">
    <location>
        <position position="89"/>
    </location>
    <ligand>
        <name>Mg(2+)</name>
        <dbReference type="ChEBI" id="CHEBI:18420"/>
    </ligand>
</feature>
<feature type="binding site" evidence="1">
    <location>
        <begin position="92"/>
        <end position="96"/>
    </location>
    <ligand>
        <name>GMP</name>
        <dbReference type="ChEBI" id="CHEBI:58115"/>
    </ligand>
</feature>
<feature type="binding site" evidence="1">
    <location>
        <position position="92"/>
    </location>
    <ligand>
        <name>guanine</name>
        <dbReference type="ChEBI" id="CHEBI:16235"/>
    </ligand>
</feature>
<feature type="binding site" evidence="1">
    <location>
        <position position="92"/>
    </location>
    <ligand>
        <name>xanthine</name>
        <dbReference type="ChEBI" id="CHEBI:17712"/>
    </ligand>
</feature>
<feature type="binding site" evidence="1">
    <location>
        <begin position="134"/>
        <end position="135"/>
    </location>
    <ligand>
        <name>GMP</name>
        <dbReference type="ChEBI" id="CHEBI:58115"/>
    </ligand>
</feature>
<feature type="binding site" evidence="1">
    <location>
        <position position="135"/>
    </location>
    <ligand>
        <name>guanine</name>
        <dbReference type="ChEBI" id="CHEBI:16235"/>
    </ligand>
</feature>
<feature type="binding site" evidence="1">
    <location>
        <position position="135"/>
    </location>
    <ligand>
        <name>xanthine</name>
        <dbReference type="ChEBI" id="CHEBI:17712"/>
    </ligand>
</feature>
<gene>
    <name evidence="1" type="primary">gpt</name>
    <name type="ordered locus">YPTS_0943</name>
</gene>
<organism>
    <name type="scientific">Yersinia pseudotuberculosis serotype IB (strain PB1/+)</name>
    <dbReference type="NCBI Taxonomy" id="502801"/>
    <lineage>
        <taxon>Bacteria</taxon>
        <taxon>Pseudomonadati</taxon>
        <taxon>Pseudomonadota</taxon>
        <taxon>Gammaproteobacteria</taxon>
        <taxon>Enterobacterales</taxon>
        <taxon>Yersiniaceae</taxon>
        <taxon>Yersinia</taxon>
    </lineage>
</organism>
<reference key="1">
    <citation type="submission" date="2008-04" db="EMBL/GenBank/DDBJ databases">
        <title>Complete sequence of Yersinia pseudotuberculosis PB1/+.</title>
        <authorList>
            <person name="Copeland A."/>
            <person name="Lucas S."/>
            <person name="Lapidus A."/>
            <person name="Glavina del Rio T."/>
            <person name="Dalin E."/>
            <person name="Tice H."/>
            <person name="Bruce D."/>
            <person name="Goodwin L."/>
            <person name="Pitluck S."/>
            <person name="Munk A.C."/>
            <person name="Brettin T."/>
            <person name="Detter J.C."/>
            <person name="Han C."/>
            <person name="Tapia R."/>
            <person name="Schmutz J."/>
            <person name="Larimer F."/>
            <person name="Land M."/>
            <person name="Hauser L."/>
            <person name="Challacombe J.F."/>
            <person name="Green L."/>
            <person name="Lindler L.E."/>
            <person name="Nikolich M.P."/>
            <person name="Richardson P."/>
        </authorList>
    </citation>
    <scope>NUCLEOTIDE SEQUENCE [LARGE SCALE GENOMIC DNA]</scope>
    <source>
        <strain>PB1/+</strain>
    </source>
</reference>
<sequence>MNEKYVVTWDMLQIHARKLAQRLLPAEQWKGIIAVSRGGLVPAGILARELGIRYVDTVCISSYDHDNQRDLKVLKRAEGDGEGFIVIDDLVDTGGTATAIREMYPKAHFVTIFAKPAGRPLVDDYVVDIPQNTWIEQPWDMAVTFVAPLSGK</sequence>
<proteinExistence type="inferred from homology"/>